<keyword id="KW-0963">Cytoplasm</keyword>
<keyword id="KW-0396">Initiation factor</keyword>
<keyword id="KW-0648">Protein biosynthesis</keyword>
<keyword id="KW-0694">RNA-binding</keyword>
<keyword id="KW-0699">rRNA-binding</keyword>
<gene>
    <name evidence="1" type="primary">infA</name>
    <name type="ordered locus">SUN_2342</name>
</gene>
<comment type="function">
    <text evidence="1">One of the essential components for the initiation of protein synthesis. Stabilizes the binding of IF-2 and IF-3 on the 30S subunit to which N-formylmethionyl-tRNA(fMet) subsequently binds. Helps modulate mRNA selection, yielding the 30S pre-initiation complex (PIC). Upon addition of the 50S ribosomal subunit IF-1, IF-2 and IF-3 are released leaving the mature 70S translation initiation complex.</text>
</comment>
<comment type="subunit">
    <text evidence="1">Component of the 30S ribosomal translation pre-initiation complex which assembles on the 30S ribosome in the order IF-2 and IF-3, IF-1 and N-formylmethionyl-tRNA(fMet); mRNA recruitment can occur at any time during PIC assembly.</text>
</comment>
<comment type="subcellular location">
    <subcellularLocation>
        <location evidence="1">Cytoplasm</location>
    </subcellularLocation>
</comment>
<comment type="similarity">
    <text evidence="1">Belongs to the IF-1 family.</text>
</comment>
<name>IF1_SULNB</name>
<evidence type="ECO:0000255" key="1">
    <source>
        <dbReference type="HAMAP-Rule" id="MF_00075"/>
    </source>
</evidence>
<proteinExistence type="inferred from homology"/>
<organism>
    <name type="scientific">Sulfurovum sp. (strain NBC37-1)</name>
    <dbReference type="NCBI Taxonomy" id="387093"/>
    <lineage>
        <taxon>Bacteria</taxon>
        <taxon>Pseudomonadati</taxon>
        <taxon>Campylobacterota</taxon>
        <taxon>Epsilonproteobacteria</taxon>
        <taxon>Campylobacterales</taxon>
        <taxon>Sulfurovaceae</taxon>
        <taxon>Sulfurovum</taxon>
    </lineage>
</organism>
<sequence>MAKDDVIEIDGKVVEALPNATFRVELDNGHIVLCHIAGKMRMHYIKILPGDKVKVELTPYSLDKGRITFRYK</sequence>
<protein>
    <recommendedName>
        <fullName evidence="1">Translation initiation factor IF-1</fullName>
    </recommendedName>
</protein>
<feature type="chain" id="PRO_0000338941" description="Translation initiation factor IF-1">
    <location>
        <begin position="1"/>
        <end position="72"/>
    </location>
</feature>
<feature type="domain" description="S1-like" evidence="1">
    <location>
        <begin position="1"/>
        <end position="72"/>
    </location>
</feature>
<dbReference type="EMBL" id="AP009179">
    <property type="protein sequence ID" value="BAF73278.1"/>
    <property type="molecule type" value="Genomic_DNA"/>
</dbReference>
<dbReference type="RefSeq" id="WP_008244832.1">
    <property type="nucleotide sequence ID" value="NC_009663.1"/>
</dbReference>
<dbReference type="SMR" id="A6QCR9"/>
<dbReference type="STRING" id="387093.SUN_2342"/>
<dbReference type="KEGG" id="sun:SUN_2342"/>
<dbReference type="eggNOG" id="COG0361">
    <property type="taxonomic scope" value="Bacteria"/>
</dbReference>
<dbReference type="HOGENOM" id="CLU_151267_1_0_7"/>
<dbReference type="OrthoDB" id="9803250at2"/>
<dbReference type="Proteomes" id="UP000006378">
    <property type="component" value="Chromosome"/>
</dbReference>
<dbReference type="GO" id="GO:0005829">
    <property type="term" value="C:cytosol"/>
    <property type="evidence" value="ECO:0007669"/>
    <property type="project" value="TreeGrafter"/>
</dbReference>
<dbReference type="GO" id="GO:0043022">
    <property type="term" value="F:ribosome binding"/>
    <property type="evidence" value="ECO:0007669"/>
    <property type="project" value="UniProtKB-UniRule"/>
</dbReference>
<dbReference type="GO" id="GO:0019843">
    <property type="term" value="F:rRNA binding"/>
    <property type="evidence" value="ECO:0007669"/>
    <property type="project" value="UniProtKB-UniRule"/>
</dbReference>
<dbReference type="GO" id="GO:0003743">
    <property type="term" value="F:translation initiation factor activity"/>
    <property type="evidence" value="ECO:0007669"/>
    <property type="project" value="UniProtKB-UniRule"/>
</dbReference>
<dbReference type="CDD" id="cd04451">
    <property type="entry name" value="S1_IF1"/>
    <property type="match status" value="1"/>
</dbReference>
<dbReference type="FunFam" id="2.40.50.140:FF:000002">
    <property type="entry name" value="Translation initiation factor IF-1"/>
    <property type="match status" value="1"/>
</dbReference>
<dbReference type="Gene3D" id="2.40.50.140">
    <property type="entry name" value="Nucleic acid-binding proteins"/>
    <property type="match status" value="1"/>
</dbReference>
<dbReference type="HAMAP" id="MF_00075">
    <property type="entry name" value="IF_1"/>
    <property type="match status" value="1"/>
</dbReference>
<dbReference type="InterPro" id="IPR012340">
    <property type="entry name" value="NA-bd_OB-fold"/>
</dbReference>
<dbReference type="InterPro" id="IPR006196">
    <property type="entry name" value="RNA-binding_domain_S1_IF1"/>
</dbReference>
<dbReference type="InterPro" id="IPR003029">
    <property type="entry name" value="S1_domain"/>
</dbReference>
<dbReference type="InterPro" id="IPR004368">
    <property type="entry name" value="TIF_IF1"/>
</dbReference>
<dbReference type="NCBIfam" id="TIGR00008">
    <property type="entry name" value="infA"/>
    <property type="match status" value="1"/>
</dbReference>
<dbReference type="PANTHER" id="PTHR33370">
    <property type="entry name" value="TRANSLATION INITIATION FACTOR IF-1, CHLOROPLASTIC"/>
    <property type="match status" value="1"/>
</dbReference>
<dbReference type="PANTHER" id="PTHR33370:SF1">
    <property type="entry name" value="TRANSLATION INITIATION FACTOR IF-1, CHLOROPLASTIC"/>
    <property type="match status" value="1"/>
</dbReference>
<dbReference type="Pfam" id="PF01176">
    <property type="entry name" value="eIF-1a"/>
    <property type="match status" value="1"/>
</dbReference>
<dbReference type="SMART" id="SM00316">
    <property type="entry name" value="S1"/>
    <property type="match status" value="1"/>
</dbReference>
<dbReference type="SUPFAM" id="SSF50249">
    <property type="entry name" value="Nucleic acid-binding proteins"/>
    <property type="match status" value="1"/>
</dbReference>
<dbReference type="PROSITE" id="PS50832">
    <property type="entry name" value="S1_IF1_TYPE"/>
    <property type="match status" value="1"/>
</dbReference>
<reference key="1">
    <citation type="journal article" date="2007" name="Proc. Natl. Acad. Sci. U.S.A.">
        <title>Deep-sea vent epsilon-proteobacterial genomes provide insights into emergence of pathogens.</title>
        <authorList>
            <person name="Nakagawa S."/>
            <person name="Takaki Y."/>
            <person name="Shimamura S."/>
            <person name="Reysenbach A.-L."/>
            <person name="Takai K."/>
            <person name="Horikoshi K."/>
        </authorList>
    </citation>
    <scope>NUCLEOTIDE SEQUENCE [LARGE SCALE GENOMIC DNA]</scope>
    <source>
        <strain>NBC37-1</strain>
    </source>
</reference>
<accession>A6QCR9</accession>